<evidence type="ECO:0000250" key="1"/>
<evidence type="ECO:0000255" key="2">
    <source>
        <dbReference type="PROSITE-ProRule" id="PRU10001"/>
    </source>
</evidence>
<evidence type="ECO:0000305" key="3"/>
<comment type="catalytic activity">
    <reaction evidence="2">
        <text>a primary alcohol + NAD(+) = an aldehyde + NADH + H(+)</text>
        <dbReference type="Rhea" id="RHEA:10736"/>
        <dbReference type="ChEBI" id="CHEBI:15378"/>
        <dbReference type="ChEBI" id="CHEBI:15734"/>
        <dbReference type="ChEBI" id="CHEBI:17478"/>
        <dbReference type="ChEBI" id="CHEBI:57540"/>
        <dbReference type="ChEBI" id="CHEBI:57945"/>
        <dbReference type="EC" id="1.1.1.1"/>
    </reaction>
</comment>
<comment type="catalytic activity">
    <reaction evidence="2">
        <text>a secondary alcohol + NAD(+) = a ketone + NADH + H(+)</text>
        <dbReference type="Rhea" id="RHEA:10740"/>
        <dbReference type="ChEBI" id="CHEBI:15378"/>
        <dbReference type="ChEBI" id="CHEBI:17087"/>
        <dbReference type="ChEBI" id="CHEBI:35681"/>
        <dbReference type="ChEBI" id="CHEBI:57540"/>
        <dbReference type="ChEBI" id="CHEBI:57945"/>
        <dbReference type="EC" id="1.1.1.1"/>
    </reaction>
</comment>
<comment type="subunit">
    <text>Homodimer.</text>
</comment>
<comment type="similarity">
    <text evidence="3">Belongs to the short-chain dehydrogenases/reductases (SDR) family.</text>
</comment>
<proteinExistence type="inferred from homology"/>
<protein>
    <recommendedName>
        <fullName>Alcohol dehydrogenase 2</fullName>
        <ecNumber>1.1.1.1</ecNumber>
    </recommendedName>
</protein>
<name>ADH2_DROBU</name>
<gene>
    <name type="primary">Adh2</name>
</gene>
<feature type="initiator methionine" description="Removed" evidence="1">
    <location>
        <position position="1"/>
    </location>
</feature>
<feature type="chain" id="PRO_0000054456" description="Alcohol dehydrogenase 2">
    <location>
        <begin position="2"/>
        <end position="254"/>
    </location>
</feature>
<feature type="active site" description="Proton acceptor" evidence="2">
    <location>
        <position position="151"/>
    </location>
</feature>
<feature type="binding site" evidence="1">
    <location>
        <begin position="10"/>
        <end position="33"/>
    </location>
    <ligand>
        <name>NAD(+)</name>
        <dbReference type="ChEBI" id="CHEBI:57540"/>
    </ligand>
</feature>
<feature type="binding site" evidence="1">
    <location>
        <position position="138"/>
    </location>
    <ligand>
        <name>substrate</name>
    </ligand>
</feature>
<dbReference type="EC" id="1.1.1.1"/>
<dbReference type="EMBL" id="M62743">
    <property type="protein sequence ID" value="AAA28328.1"/>
    <property type="molecule type" value="Genomic_DNA"/>
</dbReference>
<dbReference type="SMR" id="P25720"/>
<dbReference type="FlyBase" id="FBgn0012231">
    <property type="gene designation" value="Dbuz\Adh2"/>
</dbReference>
<dbReference type="GO" id="GO:0005737">
    <property type="term" value="C:cytoplasm"/>
    <property type="evidence" value="ECO:0007669"/>
    <property type="project" value="TreeGrafter"/>
</dbReference>
<dbReference type="GO" id="GO:0004022">
    <property type="term" value="F:alcohol dehydrogenase (NAD+) activity"/>
    <property type="evidence" value="ECO:0000250"/>
    <property type="project" value="UniProtKB"/>
</dbReference>
<dbReference type="GO" id="GO:0006066">
    <property type="term" value="P:alcohol metabolic process"/>
    <property type="evidence" value="ECO:0007669"/>
    <property type="project" value="InterPro"/>
</dbReference>
<dbReference type="CDD" id="cd05323">
    <property type="entry name" value="ADH_SDR_c_like"/>
    <property type="match status" value="1"/>
</dbReference>
<dbReference type="FunFam" id="3.40.50.720:FF:000302">
    <property type="entry name" value="Alcohol dehydrogenase"/>
    <property type="match status" value="1"/>
</dbReference>
<dbReference type="Gene3D" id="3.40.50.720">
    <property type="entry name" value="NAD(P)-binding Rossmann-like Domain"/>
    <property type="match status" value="1"/>
</dbReference>
<dbReference type="InterPro" id="IPR002425">
    <property type="entry name" value="ADH_Drosophila-type"/>
</dbReference>
<dbReference type="InterPro" id="IPR036291">
    <property type="entry name" value="NAD(P)-bd_dom_sf"/>
</dbReference>
<dbReference type="InterPro" id="IPR020904">
    <property type="entry name" value="Sc_DH/Rdtase_CS"/>
</dbReference>
<dbReference type="InterPro" id="IPR002347">
    <property type="entry name" value="SDR_fam"/>
</dbReference>
<dbReference type="PANTHER" id="PTHR44229">
    <property type="entry name" value="15-HYDROXYPROSTAGLANDIN DEHYDROGENASE [NAD(+)]"/>
    <property type="match status" value="1"/>
</dbReference>
<dbReference type="PANTHER" id="PTHR44229:SF8">
    <property type="entry name" value="ALCOHOL DEHYDROGENASE-RELATED"/>
    <property type="match status" value="1"/>
</dbReference>
<dbReference type="Pfam" id="PF00106">
    <property type="entry name" value="adh_short"/>
    <property type="match status" value="1"/>
</dbReference>
<dbReference type="PRINTS" id="PR01168">
    <property type="entry name" value="ALCDHDRGNASE"/>
</dbReference>
<dbReference type="PRINTS" id="PR01167">
    <property type="entry name" value="INSADHFAMILY"/>
</dbReference>
<dbReference type="PRINTS" id="PR00080">
    <property type="entry name" value="SDRFAMILY"/>
</dbReference>
<dbReference type="SUPFAM" id="SSF51735">
    <property type="entry name" value="NAD(P)-binding Rossmann-fold domains"/>
    <property type="match status" value="1"/>
</dbReference>
<dbReference type="PROSITE" id="PS00061">
    <property type="entry name" value="ADH_SHORT"/>
    <property type="match status" value="1"/>
</dbReference>
<reference key="1">
    <citation type="submission" date="1991-07" db="EMBL/GenBank/DDBJ databases">
        <title>ADH-2 sequence evolution in the Drosophila mulleri subgroup.</title>
        <authorList>
            <person name="Dorit R.L."/>
            <person name="Ayala F.J. III"/>
            <person name="Gilbert W."/>
        </authorList>
    </citation>
    <scope>NUCLEOTIDE SEQUENCE [GENOMIC DNA]</scope>
</reference>
<organism>
    <name type="scientific">Drosophila buzzatii</name>
    <name type="common">Fruit fly</name>
    <dbReference type="NCBI Taxonomy" id="7264"/>
    <lineage>
        <taxon>Eukaryota</taxon>
        <taxon>Metazoa</taxon>
        <taxon>Ecdysozoa</taxon>
        <taxon>Arthropoda</taxon>
        <taxon>Hexapoda</taxon>
        <taxon>Insecta</taxon>
        <taxon>Pterygota</taxon>
        <taxon>Neoptera</taxon>
        <taxon>Endopterygota</taxon>
        <taxon>Diptera</taxon>
        <taxon>Brachycera</taxon>
        <taxon>Muscomorpha</taxon>
        <taxon>Ephydroidea</taxon>
        <taxon>Drosophilidae</taxon>
        <taxon>Drosophila</taxon>
    </lineage>
</organism>
<accession>P25720</accession>
<keyword id="KW-0520">NAD</keyword>
<keyword id="KW-0560">Oxidoreductase</keyword>
<sequence>MAIANKNIIFVAGLGGIGFDTSREIVKSGPKNLVILDRIENPAAIAELKALNPKVTVTFYPYDVTVPVAETTKLLKTIFDKLKTVDLLINGAGILDDYQIERTIAVNFTGTVNTTTAIMAFWDKRKGGPGGVIANICSVTGFNAIYQVPVYSASKAAALSFTNSLAKLAPITGVTAYSINPGITKTTLVHKFNSWLDVEPRVAELLLEHPTQTTLQCAQNFVKAIEANQNGAIWKLDLGRLEAIEWTKHWDSGI</sequence>